<protein>
    <recommendedName>
        <fullName evidence="9">Homeobox-leucine zipper protein HDG8</fullName>
    </recommendedName>
    <alternativeName>
        <fullName evidence="9">HD-ZIP protein HDG8</fullName>
    </alternativeName>
    <alternativeName>
        <fullName evidence="8">Homeodomain GLABRA 2-like protein 8</fullName>
    </alternativeName>
    <alternativeName>
        <fullName evidence="9">Homeodomain transcription factor HDG8</fullName>
    </alternativeName>
    <alternativeName>
        <fullName evidence="9">Protein HOMEODOMAIN GLABROUS 8</fullName>
    </alternativeName>
</protein>
<gene>
    <name evidence="9" type="primary">HDG8</name>
    <name evidence="8" type="synonym">HDGL2-8</name>
    <name evidence="11" type="ordered locus">At3g03260</name>
    <name evidence="12" type="ORF">T17B22.5</name>
</gene>
<dbReference type="EMBL" id="AC012328">
    <property type="protein sequence ID" value="AAF26121.1"/>
    <property type="status" value="ALT_SEQ"/>
    <property type="molecule type" value="Genomic_DNA"/>
</dbReference>
<dbReference type="EMBL" id="CP002686">
    <property type="protein sequence ID" value="AEE73918.1"/>
    <property type="molecule type" value="Genomic_DNA"/>
</dbReference>
<dbReference type="EMBL" id="AK117867">
    <property type="protein sequence ID" value="BAC42508.1"/>
    <property type="status" value="ALT_FRAME"/>
    <property type="molecule type" value="mRNA"/>
</dbReference>
<dbReference type="RefSeq" id="NP_186976.2">
    <property type="nucleotide sequence ID" value="NM_111196.2"/>
</dbReference>
<dbReference type="SMR" id="Q9M9P4"/>
<dbReference type="FunCoup" id="Q9M9P4">
    <property type="interactions" value="7"/>
</dbReference>
<dbReference type="STRING" id="3702.Q9M9P4"/>
<dbReference type="PaxDb" id="3702-AT3G03260.1"/>
<dbReference type="ProteomicsDB" id="230314"/>
<dbReference type="EnsemblPlants" id="AT3G03260.1">
    <property type="protein sequence ID" value="AT3G03260.1"/>
    <property type="gene ID" value="AT3G03260"/>
</dbReference>
<dbReference type="GeneID" id="821305"/>
<dbReference type="Gramene" id="AT3G03260.1">
    <property type="protein sequence ID" value="AT3G03260.1"/>
    <property type="gene ID" value="AT3G03260"/>
</dbReference>
<dbReference type="KEGG" id="ath:AT3G03260"/>
<dbReference type="Araport" id="AT3G03260"/>
<dbReference type="TAIR" id="AT3G03260">
    <property type="gene designation" value="HDG8"/>
</dbReference>
<dbReference type="eggNOG" id="ENOG502QTNV">
    <property type="taxonomic scope" value="Eukaryota"/>
</dbReference>
<dbReference type="HOGENOM" id="CLU_015002_2_1_1"/>
<dbReference type="InParanoid" id="Q9M9P4"/>
<dbReference type="OMA" id="QDCYMDA"/>
<dbReference type="PhylomeDB" id="Q9M9P4"/>
<dbReference type="PRO" id="PR:Q9M9P4"/>
<dbReference type="Proteomes" id="UP000006548">
    <property type="component" value="Chromosome 3"/>
</dbReference>
<dbReference type="ExpressionAtlas" id="Q9M9P4">
    <property type="expression patterns" value="baseline and differential"/>
</dbReference>
<dbReference type="GO" id="GO:0005634">
    <property type="term" value="C:nucleus"/>
    <property type="evidence" value="ECO:0007669"/>
    <property type="project" value="UniProtKB-SubCell"/>
</dbReference>
<dbReference type="GO" id="GO:0003677">
    <property type="term" value="F:DNA binding"/>
    <property type="evidence" value="ECO:0007669"/>
    <property type="project" value="UniProtKB-KW"/>
</dbReference>
<dbReference type="GO" id="GO:0003700">
    <property type="term" value="F:DNA-binding transcription factor activity"/>
    <property type="evidence" value="ECO:0000250"/>
    <property type="project" value="TAIR"/>
</dbReference>
<dbReference type="GO" id="GO:0008289">
    <property type="term" value="F:lipid binding"/>
    <property type="evidence" value="ECO:0007669"/>
    <property type="project" value="InterPro"/>
</dbReference>
<dbReference type="CDD" id="cd00086">
    <property type="entry name" value="homeodomain"/>
    <property type="match status" value="1"/>
</dbReference>
<dbReference type="CDD" id="cd08875">
    <property type="entry name" value="START_ArGLABRA2_like"/>
    <property type="match status" value="1"/>
</dbReference>
<dbReference type="FunFam" id="1.10.10.60:FF:000229">
    <property type="entry name" value="Homeobox-leucine zipper protein HDG1"/>
    <property type="match status" value="1"/>
</dbReference>
<dbReference type="FunFam" id="3.30.530.20:FF:000099">
    <property type="entry name" value="Homeobox-leucine zipper protein HDG8"/>
    <property type="match status" value="1"/>
</dbReference>
<dbReference type="Gene3D" id="3.30.530.20">
    <property type="match status" value="1"/>
</dbReference>
<dbReference type="Gene3D" id="1.10.10.60">
    <property type="entry name" value="Homeodomain-like"/>
    <property type="match status" value="1"/>
</dbReference>
<dbReference type="InterPro" id="IPR042160">
    <property type="entry name" value="GLABRA2/ANL2/PDF2/ATML1-like"/>
</dbReference>
<dbReference type="InterPro" id="IPR001356">
    <property type="entry name" value="HD"/>
</dbReference>
<dbReference type="InterPro" id="IPR009057">
    <property type="entry name" value="Homeodomain-like_sf"/>
</dbReference>
<dbReference type="InterPro" id="IPR023393">
    <property type="entry name" value="START-like_dom_sf"/>
</dbReference>
<dbReference type="InterPro" id="IPR002913">
    <property type="entry name" value="START_lipid-bd_dom"/>
</dbReference>
<dbReference type="PANTHER" id="PTHR45654:SF63">
    <property type="entry name" value="HOMEOBOX-LEUCINE ZIPPER PROTEIN HDG8"/>
    <property type="match status" value="1"/>
</dbReference>
<dbReference type="PANTHER" id="PTHR45654">
    <property type="entry name" value="HOMEOBOX-LEUCINE ZIPPER PROTEIN MERISTEM L1"/>
    <property type="match status" value="1"/>
</dbReference>
<dbReference type="Pfam" id="PF00046">
    <property type="entry name" value="Homeodomain"/>
    <property type="match status" value="1"/>
</dbReference>
<dbReference type="Pfam" id="PF01852">
    <property type="entry name" value="START"/>
    <property type="match status" value="1"/>
</dbReference>
<dbReference type="SMART" id="SM00389">
    <property type="entry name" value="HOX"/>
    <property type="match status" value="1"/>
</dbReference>
<dbReference type="SMART" id="SM00234">
    <property type="entry name" value="START"/>
    <property type="match status" value="1"/>
</dbReference>
<dbReference type="SUPFAM" id="SSF55961">
    <property type="entry name" value="Bet v1-like"/>
    <property type="match status" value="2"/>
</dbReference>
<dbReference type="SUPFAM" id="SSF46689">
    <property type="entry name" value="Homeodomain-like"/>
    <property type="match status" value="1"/>
</dbReference>
<dbReference type="PROSITE" id="PS50071">
    <property type="entry name" value="HOMEOBOX_2"/>
    <property type="match status" value="1"/>
</dbReference>
<dbReference type="PROSITE" id="PS50848">
    <property type="entry name" value="START"/>
    <property type="match status" value="1"/>
</dbReference>
<sequence length="699" mass="78426">MDNNGGGSSGNEQYTSGDAKQNGKRTCHRHTPQQIQRLEAYFKECPHPDERQRNQLCRELKLEPDQIKFWFQNKRTQSKTQEDRSTNVLLRGENETLQSDNEAMLDALKSVLCPACGGPPFGREERGHNLQKLRFENARLKDHRDRISNFVDQHKPNEPTVEDSLAYVPSLDRISYGINGGNMYEPSSSYGPPNFQIIQPRPLAETDMSLLSEIAASAVEELKRLFLAEEQFWVKSCIDETYVIDTESYERFSHAVKHFSSTTAHVESSKAVTVVHVEAINLIQMFLDPEKWKELFPTIVNKANTIHVLGSGLPIRGNCNVLQVMWEQLHILSPLVPAREFMVVRCCQEIEKGIWIIADVSHRANFDFGNAACYKRPSGCLIQALPDAHSKVMWIEHVEVDHKLDTHKIYRDLLSGGSGYGAKRWIVTLERMCERMALSSIQTLPPSDRSEVITTGEARRSVMKLGERMVKNFNEMLTMSGKIDFPQQSKNGVRVSIRMNIEAGQPPGIVVSASSSLAIPLTPLQVFAFLQNLDTRQQWDILSYGTVVNEIARIVTGSSETNCVTILRVHPTHEENNDKMVVQDSCKDDMLMLQDCYMDALGGMIVYAPMDMATMHFAVSGEVDPSHIPILPSGFVISSDGRRSTVEDGGTLLTVAFQILVSGKANRSREVNEKSVDTVSALISSTIQRIKGLLNCPEC</sequence>
<organism>
    <name type="scientific">Arabidopsis thaliana</name>
    <name type="common">Mouse-ear cress</name>
    <dbReference type="NCBI Taxonomy" id="3702"/>
    <lineage>
        <taxon>Eukaryota</taxon>
        <taxon>Viridiplantae</taxon>
        <taxon>Streptophyta</taxon>
        <taxon>Embryophyta</taxon>
        <taxon>Tracheophyta</taxon>
        <taxon>Spermatophyta</taxon>
        <taxon>Magnoliopsida</taxon>
        <taxon>eudicotyledons</taxon>
        <taxon>Gunneridae</taxon>
        <taxon>Pentapetalae</taxon>
        <taxon>rosids</taxon>
        <taxon>malvids</taxon>
        <taxon>Brassicales</taxon>
        <taxon>Brassicaceae</taxon>
        <taxon>Camelineae</taxon>
        <taxon>Arabidopsis</taxon>
    </lineage>
</organism>
<proteinExistence type="evidence at protein level"/>
<reference key="1">
    <citation type="journal article" date="2000" name="Nature">
        <title>Sequence and analysis of chromosome 3 of the plant Arabidopsis thaliana.</title>
        <authorList>
            <person name="Salanoubat M."/>
            <person name="Lemcke K."/>
            <person name="Rieger M."/>
            <person name="Ansorge W."/>
            <person name="Unseld M."/>
            <person name="Fartmann B."/>
            <person name="Valle G."/>
            <person name="Bloecker H."/>
            <person name="Perez-Alonso M."/>
            <person name="Obermaier B."/>
            <person name="Delseny M."/>
            <person name="Boutry M."/>
            <person name="Grivell L.A."/>
            <person name="Mache R."/>
            <person name="Puigdomenech P."/>
            <person name="De Simone V."/>
            <person name="Choisne N."/>
            <person name="Artiguenave F."/>
            <person name="Robert C."/>
            <person name="Brottier P."/>
            <person name="Wincker P."/>
            <person name="Cattolico L."/>
            <person name="Weissenbach J."/>
            <person name="Saurin W."/>
            <person name="Quetier F."/>
            <person name="Schaefer M."/>
            <person name="Mueller-Auer S."/>
            <person name="Gabel C."/>
            <person name="Fuchs M."/>
            <person name="Benes V."/>
            <person name="Wurmbach E."/>
            <person name="Drzonek H."/>
            <person name="Erfle H."/>
            <person name="Jordan N."/>
            <person name="Bangert S."/>
            <person name="Wiedelmann R."/>
            <person name="Kranz H."/>
            <person name="Voss H."/>
            <person name="Holland R."/>
            <person name="Brandt P."/>
            <person name="Nyakatura G."/>
            <person name="Vezzi A."/>
            <person name="D'Angelo M."/>
            <person name="Pallavicini A."/>
            <person name="Toppo S."/>
            <person name="Simionati B."/>
            <person name="Conrad A."/>
            <person name="Hornischer K."/>
            <person name="Kauer G."/>
            <person name="Loehnert T.-H."/>
            <person name="Nordsiek G."/>
            <person name="Reichelt J."/>
            <person name="Scharfe M."/>
            <person name="Schoen O."/>
            <person name="Bargues M."/>
            <person name="Terol J."/>
            <person name="Climent J."/>
            <person name="Navarro P."/>
            <person name="Collado C."/>
            <person name="Perez-Perez A."/>
            <person name="Ottenwaelder B."/>
            <person name="Duchemin D."/>
            <person name="Cooke R."/>
            <person name="Laudie M."/>
            <person name="Berger-Llauro C."/>
            <person name="Purnelle B."/>
            <person name="Masuy D."/>
            <person name="de Haan M."/>
            <person name="Maarse A.C."/>
            <person name="Alcaraz J.-P."/>
            <person name="Cottet A."/>
            <person name="Casacuberta E."/>
            <person name="Monfort A."/>
            <person name="Argiriou A."/>
            <person name="Flores M."/>
            <person name="Liguori R."/>
            <person name="Vitale D."/>
            <person name="Mannhaupt G."/>
            <person name="Haase D."/>
            <person name="Schoof H."/>
            <person name="Rudd S."/>
            <person name="Zaccaria P."/>
            <person name="Mewes H.-W."/>
            <person name="Mayer K.F.X."/>
            <person name="Kaul S."/>
            <person name="Town C.D."/>
            <person name="Koo H.L."/>
            <person name="Tallon L.J."/>
            <person name="Jenkins J."/>
            <person name="Rooney T."/>
            <person name="Rizzo M."/>
            <person name="Walts A."/>
            <person name="Utterback T."/>
            <person name="Fujii C.Y."/>
            <person name="Shea T.P."/>
            <person name="Creasy T.H."/>
            <person name="Haas B."/>
            <person name="Maiti R."/>
            <person name="Wu D."/>
            <person name="Peterson J."/>
            <person name="Van Aken S."/>
            <person name="Pai G."/>
            <person name="Militscher J."/>
            <person name="Sellers P."/>
            <person name="Gill J.E."/>
            <person name="Feldblyum T.V."/>
            <person name="Preuss D."/>
            <person name="Lin X."/>
            <person name="Nierman W.C."/>
            <person name="Salzberg S.L."/>
            <person name="White O."/>
            <person name="Venter J.C."/>
            <person name="Fraser C.M."/>
            <person name="Kaneko T."/>
            <person name="Nakamura Y."/>
            <person name="Sato S."/>
            <person name="Kato T."/>
            <person name="Asamizu E."/>
            <person name="Sasamoto S."/>
            <person name="Kimura T."/>
            <person name="Idesawa K."/>
            <person name="Kawashima K."/>
            <person name="Kishida Y."/>
            <person name="Kiyokawa C."/>
            <person name="Kohara M."/>
            <person name="Matsumoto M."/>
            <person name="Matsuno A."/>
            <person name="Muraki A."/>
            <person name="Nakayama S."/>
            <person name="Nakazaki N."/>
            <person name="Shinpo S."/>
            <person name="Takeuchi C."/>
            <person name="Wada T."/>
            <person name="Watanabe A."/>
            <person name="Yamada M."/>
            <person name="Yasuda M."/>
            <person name="Tabata S."/>
        </authorList>
    </citation>
    <scope>NUCLEOTIDE SEQUENCE [LARGE SCALE GENOMIC DNA]</scope>
    <source>
        <strain>cv. Columbia</strain>
    </source>
</reference>
<reference key="2">
    <citation type="journal article" date="2017" name="Plant J.">
        <title>Araport11: a complete reannotation of the Arabidopsis thaliana reference genome.</title>
        <authorList>
            <person name="Cheng C.Y."/>
            <person name="Krishnakumar V."/>
            <person name="Chan A.P."/>
            <person name="Thibaud-Nissen F."/>
            <person name="Schobel S."/>
            <person name="Town C.D."/>
        </authorList>
    </citation>
    <scope>GENOME REANNOTATION</scope>
    <source>
        <strain>cv. Columbia</strain>
    </source>
</reference>
<reference key="3">
    <citation type="journal article" date="2002" name="Science">
        <title>Functional annotation of a full-length Arabidopsis cDNA collection.</title>
        <authorList>
            <person name="Seki M."/>
            <person name="Narusaka M."/>
            <person name="Kamiya A."/>
            <person name="Ishida J."/>
            <person name="Satou M."/>
            <person name="Sakurai T."/>
            <person name="Nakajima M."/>
            <person name="Enju A."/>
            <person name="Akiyama K."/>
            <person name="Oono Y."/>
            <person name="Muramatsu M."/>
            <person name="Hayashizaki Y."/>
            <person name="Kawai J."/>
            <person name="Carninci P."/>
            <person name="Itoh M."/>
            <person name="Ishii Y."/>
            <person name="Arakawa T."/>
            <person name="Shibata K."/>
            <person name="Shinagawa A."/>
            <person name="Shinozaki K."/>
        </authorList>
    </citation>
    <scope>NUCLEOTIDE SEQUENCE [LARGE SCALE MRNA]</scope>
    <source>
        <strain>cv. Columbia</strain>
    </source>
</reference>
<reference key="4">
    <citation type="journal article" date="2000" name="Plant Mol. Biol.">
        <title>Organization and structural evolution of four multigene families in Arabidopsis thaliana: AtLCAD, AtLGT, AtMYST and AtHD-GL2.</title>
        <authorList>
            <person name="Tavares R."/>
            <person name="Aubourg S."/>
            <person name="Lecharny A."/>
            <person name="Kreis M."/>
        </authorList>
    </citation>
    <scope>GENE FAMILY</scope>
</reference>
<reference key="5">
    <citation type="journal article" date="2006" name="Plant Physiol.">
        <title>Characterization of the class IV homeodomain-leucine zipper gene family in Arabidopsis.</title>
        <authorList>
            <person name="Nakamura M."/>
            <person name="Katsumata H."/>
            <person name="Abe M."/>
            <person name="Yabe N."/>
            <person name="Komeda Y."/>
            <person name="Yamamoto K.T."/>
            <person name="Takahashi T."/>
        </authorList>
    </citation>
    <scope>TISSUE SPECIFICITY</scope>
    <scope>GENE FAMILY</scope>
    <scope>NOMENCLATURE</scope>
</reference>
<reference key="6">
    <citation type="journal article" date="2015" name="Development">
        <title>AIL and HDG proteins act antagonistically to control cell proliferation.</title>
        <authorList>
            <person name="Horstman A."/>
            <person name="Fukuoka H."/>
            <person name="Muino J.M."/>
            <person name="Nitsch L."/>
            <person name="Guo C."/>
            <person name="Passarinho P."/>
            <person name="Sanchez-Perez G."/>
            <person name="Immink R."/>
            <person name="Angenent G."/>
            <person name="Boutilier K."/>
        </authorList>
    </citation>
    <scope>INTERACTION WITH ANT</scope>
    <source>
        <strain>cv. Columbia</strain>
    </source>
</reference>
<accession>Q9M9P4</accession>
<accession>Q8GY47</accession>
<name>HDG8_ARATH</name>
<feature type="chain" id="PRO_0000331669" description="Homeobox-leucine zipper protein HDG8">
    <location>
        <begin position="1"/>
        <end position="699"/>
    </location>
</feature>
<feature type="domain" description="START" evidence="4">
    <location>
        <begin position="204"/>
        <end position="438"/>
    </location>
</feature>
<feature type="DNA-binding region" description="Homeobox" evidence="3">
    <location>
        <begin position="23"/>
        <end position="82"/>
    </location>
</feature>
<feature type="region of interest" description="Disordered" evidence="5">
    <location>
        <begin position="1"/>
        <end position="31"/>
    </location>
</feature>
<feature type="coiled-coil region" evidence="2">
    <location>
        <begin position="89"/>
        <end position="149"/>
    </location>
</feature>
<feature type="compositionally biased region" description="Polar residues" evidence="5">
    <location>
        <begin position="10"/>
        <end position="19"/>
    </location>
</feature>
<feature type="compositionally biased region" description="Basic residues" evidence="5">
    <location>
        <begin position="22"/>
        <end position="31"/>
    </location>
</feature>
<comment type="function">
    <text evidence="1">Probable transcription factor.</text>
</comment>
<comment type="subunit">
    <text evidence="7">Interacts with ANT.</text>
</comment>
<comment type="subcellular location">
    <subcellularLocation>
        <location evidence="10">Nucleus</location>
    </subcellularLocation>
</comment>
<comment type="tissue specificity">
    <text evidence="6">Expressed in the embryo at early stage and in the endosperm.</text>
</comment>
<comment type="similarity">
    <text evidence="10">Belongs to the HD-ZIP homeobox family. Class IV subfamily.</text>
</comment>
<comment type="sequence caution" evidence="10">
    <conflict type="erroneous gene model prediction">
        <sequence resource="EMBL-CDS" id="AAF26121"/>
    </conflict>
</comment>
<comment type="sequence caution" evidence="10">
    <conflict type="frameshift">
        <sequence resource="EMBL-CDS" id="BAC42508"/>
    </conflict>
</comment>
<keyword id="KW-0175">Coiled coil</keyword>
<keyword id="KW-0238">DNA-binding</keyword>
<keyword id="KW-0371">Homeobox</keyword>
<keyword id="KW-0539">Nucleus</keyword>
<keyword id="KW-1185">Reference proteome</keyword>
<keyword id="KW-0804">Transcription</keyword>
<keyword id="KW-0805">Transcription regulation</keyword>
<evidence type="ECO:0000250" key="1"/>
<evidence type="ECO:0000255" key="2"/>
<evidence type="ECO:0000255" key="3">
    <source>
        <dbReference type="PROSITE-ProRule" id="PRU00108"/>
    </source>
</evidence>
<evidence type="ECO:0000255" key="4">
    <source>
        <dbReference type="PROSITE-ProRule" id="PRU00197"/>
    </source>
</evidence>
<evidence type="ECO:0000256" key="5">
    <source>
        <dbReference type="SAM" id="MobiDB-lite"/>
    </source>
</evidence>
<evidence type="ECO:0000269" key="6">
    <source>
    </source>
</evidence>
<evidence type="ECO:0000269" key="7">
    <source>
    </source>
</evidence>
<evidence type="ECO:0000303" key="8">
    <source>
    </source>
</evidence>
<evidence type="ECO:0000303" key="9">
    <source>
    </source>
</evidence>
<evidence type="ECO:0000305" key="10"/>
<evidence type="ECO:0000312" key="11">
    <source>
        <dbReference type="Araport" id="AT3G03260"/>
    </source>
</evidence>
<evidence type="ECO:0000312" key="12">
    <source>
        <dbReference type="EMBL" id="AAF26121.1"/>
    </source>
</evidence>